<organism>
    <name type="scientific">Pasteurella multocida (strain Pm70)</name>
    <dbReference type="NCBI Taxonomy" id="272843"/>
    <lineage>
        <taxon>Bacteria</taxon>
        <taxon>Pseudomonadati</taxon>
        <taxon>Pseudomonadota</taxon>
        <taxon>Gammaproteobacteria</taxon>
        <taxon>Pasteurellales</taxon>
        <taxon>Pasteurellaceae</taxon>
        <taxon>Pasteurella</taxon>
    </lineage>
</organism>
<evidence type="ECO:0000250" key="1"/>
<evidence type="ECO:0000305" key="2"/>
<sequence>MAEITASLVKELRERTGAGMMECKKALVEANGDIELAIDNMRKSGQAKAAKKAGRVAAEGVILARIGAGFGVLVEMNCETDFVAKDAGFLGLANEVADYALANKGVTIEALQAQFEEKRATLVAKIGENMNIRRVQFLDGDVVGSYLHGAKIGVLVAGKNADEDLLKKIAMHVAASRPEFVKPEDVSADVVAKEREIQVAIAMESGKPREIAEKMVEGRMKKFTGEVSLTGQPFVMDPAKSVGEFLKESGADVTNFVRFEVGEGIEKVESDFAAEVAAMQKI</sequence>
<reference key="1">
    <citation type="journal article" date="2001" name="Proc. Natl. Acad. Sci. U.S.A.">
        <title>Complete genomic sequence of Pasteurella multocida Pm70.</title>
        <authorList>
            <person name="May B.J."/>
            <person name="Zhang Q."/>
            <person name="Li L.L."/>
            <person name="Paustian M.L."/>
            <person name="Whittam T.S."/>
            <person name="Kapur V."/>
        </authorList>
    </citation>
    <scope>NUCLEOTIDE SEQUENCE [LARGE SCALE GENOMIC DNA]</scope>
    <source>
        <strain>Pm70</strain>
    </source>
</reference>
<feature type="chain" id="PRO_0000161168" description="Elongation factor Ts">
    <location>
        <begin position="1"/>
        <end position="282"/>
    </location>
</feature>
<feature type="region of interest" description="Involved in Mg(2+) ion dislocation from EF-Tu" evidence="1">
    <location>
        <begin position="80"/>
        <end position="83"/>
    </location>
</feature>
<gene>
    <name type="primary">tsf</name>
    <name type="ordered locus">PM1985</name>
</gene>
<proteinExistence type="inferred from homology"/>
<dbReference type="EMBL" id="AE004439">
    <property type="protein sequence ID" value="AAK04069.1"/>
    <property type="molecule type" value="Genomic_DNA"/>
</dbReference>
<dbReference type="RefSeq" id="WP_005719507.1">
    <property type="nucleotide sequence ID" value="NC_002663.1"/>
</dbReference>
<dbReference type="SMR" id="P57983"/>
<dbReference type="STRING" id="272843.PM1985"/>
<dbReference type="EnsemblBacteria" id="AAK04069">
    <property type="protein sequence ID" value="AAK04069"/>
    <property type="gene ID" value="PM1985"/>
</dbReference>
<dbReference type="GeneID" id="77207312"/>
<dbReference type="KEGG" id="pmu:PM1985"/>
<dbReference type="HOGENOM" id="CLU_047155_0_2_6"/>
<dbReference type="OrthoDB" id="9808348at2"/>
<dbReference type="Proteomes" id="UP000000809">
    <property type="component" value="Chromosome"/>
</dbReference>
<dbReference type="GO" id="GO:0005737">
    <property type="term" value="C:cytoplasm"/>
    <property type="evidence" value="ECO:0007669"/>
    <property type="project" value="UniProtKB-SubCell"/>
</dbReference>
<dbReference type="GO" id="GO:0003746">
    <property type="term" value="F:translation elongation factor activity"/>
    <property type="evidence" value="ECO:0007669"/>
    <property type="project" value="UniProtKB-UniRule"/>
</dbReference>
<dbReference type="CDD" id="cd14275">
    <property type="entry name" value="UBA_EF-Ts"/>
    <property type="match status" value="1"/>
</dbReference>
<dbReference type="FunFam" id="1.10.286.20:FF:000001">
    <property type="entry name" value="Elongation factor Ts"/>
    <property type="match status" value="1"/>
</dbReference>
<dbReference type="FunFam" id="1.10.8.10:FF:000001">
    <property type="entry name" value="Elongation factor Ts"/>
    <property type="match status" value="1"/>
</dbReference>
<dbReference type="FunFam" id="3.30.479.20:FF:000001">
    <property type="entry name" value="Elongation factor Ts"/>
    <property type="match status" value="1"/>
</dbReference>
<dbReference type="Gene3D" id="1.10.286.20">
    <property type="match status" value="1"/>
</dbReference>
<dbReference type="Gene3D" id="1.10.8.10">
    <property type="entry name" value="DNA helicase RuvA subunit, C-terminal domain"/>
    <property type="match status" value="1"/>
</dbReference>
<dbReference type="Gene3D" id="3.30.479.20">
    <property type="entry name" value="Elongation factor Ts, dimerisation domain"/>
    <property type="match status" value="2"/>
</dbReference>
<dbReference type="HAMAP" id="MF_00050">
    <property type="entry name" value="EF_Ts"/>
    <property type="match status" value="1"/>
</dbReference>
<dbReference type="InterPro" id="IPR036402">
    <property type="entry name" value="EF-Ts_dimer_sf"/>
</dbReference>
<dbReference type="InterPro" id="IPR001816">
    <property type="entry name" value="Transl_elong_EFTs/EF1B"/>
</dbReference>
<dbReference type="InterPro" id="IPR014039">
    <property type="entry name" value="Transl_elong_EFTs/EF1B_dimer"/>
</dbReference>
<dbReference type="InterPro" id="IPR018101">
    <property type="entry name" value="Transl_elong_Ts_CS"/>
</dbReference>
<dbReference type="InterPro" id="IPR009060">
    <property type="entry name" value="UBA-like_sf"/>
</dbReference>
<dbReference type="NCBIfam" id="TIGR00116">
    <property type="entry name" value="tsf"/>
    <property type="match status" value="1"/>
</dbReference>
<dbReference type="PANTHER" id="PTHR11741">
    <property type="entry name" value="ELONGATION FACTOR TS"/>
    <property type="match status" value="1"/>
</dbReference>
<dbReference type="PANTHER" id="PTHR11741:SF0">
    <property type="entry name" value="ELONGATION FACTOR TS, MITOCHONDRIAL"/>
    <property type="match status" value="1"/>
</dbReference>
<dbReference type="Pfam" id="PF00889">
    <property type="entry name" value="EF_TS"/>
    <property type="match status" value="1"/>
</dbReference>
<dbReference type="SUPFAM" id="SSF54713">
    <property type="entry name" value="Elongation factor Ts (EF-Ts), dimerisation domain"/>
    <property type="match status" value="2"/>
</dbReference>
<dbReference type="SUPFAM" id="SSF46934">
    <property type="entry name" value="UBA-like"/>
    <property type="match status" value="1"/>
</dbReference>
<dbReference type="PROSITE" id="PS01126">
    <property type="entry name" value="EF_TS_1"/>
    <property type="match status" value="1"/>
</dbReference>
<dbReference type="PROSITE" id="PS01127">
    <property type="entry name" value="EF_TS_2"/>
    <property type="match status" value="1"/>
</dbReference>
<name>EFTS_PASMU</name>
<accession>P57983</accession>
<keyword id="KW-0963">Cytoplasm</keyword>
<keyword id="KW-0251">Elongation factor</keyword>
<keyword id="KW-0648">Protein biosynthesis</keyword>
<keyword id="KW-1185">Reference proteome</keyword>
<protein>
    <recommendedName>
        <fullName>Elongation factor Ts</fullName>
        <shortName>EF-Ts</shortName>
    </recommendedName>
</protein>
<comment type="function">
    <text evidence="1">Associates with the EF-Tu.GDP complex and induces the exchange of GDP to GTP. It remains bound to the aminoacyl-tRNA.EF-Tu.GTP complex up to the GTP hydrolysis stage on the ribosome (By similarity).</text>
</comment>
<comment type="subcellular location">
    <subcellularLocation>
        <location evidence="1">Cytoplasm</location>
    </subcellularLocation>
</comment>
<comment type="similarity">
    <text evidence="2">Belongs to the EF-Ts family.</text>
</comment>